<proteinExistence type="inferred from homology"/>
<reference key="1">
    <citation type="submission" date="2008-02" db="EMBL/GenBank/DDBJ databases">
        <title>Complete sequence of Shewanella woodyi ATCC 51908.</title>
        <authorList>
            <consortium name="US DOE Joint Genome Institute"/>
            <person name="Copeland A."/>
            <person name="Lucas S."/>
            <person name="Lapidus A."/>
            <person name="Glavina del Rio T."/>
            <person name="Dalin E."/>
            <person name="Tice H."/>
            <person name="Bruce D."/>
            <person name="Goodwin L."/>
            <person name="Pitluck S."/>
            <person name="Sims D."/>
            <person name="Brettin T."/>
            <person name="Detter J.C."/>
            <person name="Han C."/>
            <person name="Kuske C.R."/>
            <person name="Schmutz J."/>
            <person name="Larimer F."/>
            <person name="Land M."/>
            <person name="Hauser L."/>
            <person name="Kyrpides N."/>
            <person name="Lykidis A."/>
            <person name="Zhao J.-S."/>
            <person name="Richardson P."/>
        </authorList>
    </citation>
    <scope>NUCLEOTIDE SEQUENCE [LARGE SCALE GENOMIC DNA]</scope>
    <source>
        <strain>ATCC 51908 / MS32</strain>
    </source>
</reference>
<feature type="chain" id="PRO_1000144049" description="Large ribosomal subunit protein uL6">
    <location>
        <begin position="1"/>
        <end position="176"/>
    </location>
</feature>
<feature type="region of interest" description="Disordered" evidence="2">
    <location>
        <begin position="156"/>
        <end position="176"/>
    </location>
</feature>
<feature type="compositionally biased region" description="Basic and acidic residues" evidence="2">
    <location>
        <begin position="156"/>
        <end position="170"/>
    </location>
</feature>
<dbReference type="EMBL" id="CP000961">
    <property type="protein sequence ID" value="ACA88925.1"/>
    <property type="molecule type" value="Genomic_DNA"/>
</dbReference>
<dbReference type="RefSeq" id="WP_012327248.1">
    <property type="nucleotide sequence ID" value="NC_010506.1"/>
</dbReference>
<dbReference type="SMR" id="B1KMW8"/>
<dbReference type="STRING" id="392500.Swoo_4675"/>
<dbReference type="KEGG" id="swd:Swoo_4675"/>
<dbReference type="eggNOG" id="COG0097">
    <property type="taxonomic scope" value="Bacteria"/>
</dbReference>
<dbReference type="HOGENOM" id="CLU_065464_1_2_6"/>
<dbReference type="Proteomes" id="UP000002168">
    <property type="component" value="Chromosome"/>
</dbReference>
<dbReference type="GO" id="GO:0022625">
    <property type="term" value="C:cytosolic large ribosomal subunit"/>
    <property type="evidence" value="ECO:0007669"/>
    <property type="project" value="TreeGrafter"/>
</dbReference>
<dbReference type="GO" id="GO:0019843">
    <property type="term" value="F:rRNA binding"/>
    <property type="evidence" value="ECO:0007669"/>
    <property type="project" value="UniProtKB-UniRule"/>
</dbReference>
<dbReference type="GO" id="GO:0003735">
    <property type="term" value="F:structural constituent of ribosome"/>
    <property type="evidence" value="ECO:0007669"/>
    <property type="project" value="InterPro"/>
</dbReference>
<dbReference type="GO" id="GO:0002181">
    <property type="term" value="P:cytoplasmic translation"/>
    <property type="evidence" value="ECO:0007669"/>
    <property type="project" value="TreeGrafter"/>
</dbReference>
<dbReference type="FunFam" id="3.90.930.12:FF:000001">
    <property type="entry name" value="50S ribosomal protein L6"/>
    <property type="match status" value="1"/>
</dbReference>
<dbReference type="FunFam" id="3.90.930.12:FF:000002">
    <property type="entry name" value="50S ribosomal protein L6"/>
    <property type="match status" value="1"/>
</dbReference>
<dbReference type="Gene3D" id="3.90.930.12">
    <property type="entry name" value="Ribosomal protein L6, alpha-beta domain"/>
    <property type="match status" value="2"/>
</dbReference>
<dbReference type="HAMAP" id="MF_01365_B">
    <property type="entry name" value="Ribosomal_uL6_B"/>
    <property type="match status" value="1"/>
</dbReference>
<dbReference type="InterPro" id="IPR000702">
    <property type="entry name" value="Ribosomal_uL6-like"/>
</dbReference>
<dbReference type="InterPro" id="IPR036789">
    <property type="entry name" value="Ribosomal_uL6-like_a/b-dom_sf"/>
</dbReference>
<dbReference type="InterPro" id="IPR020040">
    <property type="entry name" value="Ribosomal_uL6_a/b-dom"/>
</dbReference>
<dbReference type="InterPro" id="IPR019906">
    <property type="entry name" value="Ribosomal_uL6_bac-type"/>
</dbReference>
<dbReference type="InterPro" id="IPR002358">
    <property type="entry name" value="Ribosomal_uL6_CS"/>
</dbReference>
<dbReference type="NCBIfam" id="TIGR03654">
    <property type="entry name" value="L6_bact"/>
    <property type="match status" value="1"/>
</dbReference>
<dbReference type="PANTHER" id="PTHR11655">
    <property type="entry name" value="60S/50S RIBOSOMAL PROTEIN L6/L9"/>
    <property type="match status" value="1"/>
</dbReference>
<dbReference type="PANTHER" id="PTHR11655:SF14">
    <property type="entry name" value="LARGE RIBOSOMAL SUBUNIT PROTEIN UL6M"/>
    <property type="match status" value="1"/>
</dbReference>
<dbReference type="Pfam" id="PF00347">
    <property type="entry name" value="Ribosomal_L6"/>
    <property type="match status" value="2"/>
</dbReference>
<dbReference type="PIRSF" id="PIRSF002162">
    <property type="entry name" value="Ribosomal_L6"/>
    <property type="match status" value="1"/>
</dbReference>
<dbReference type="PRINTS" id="PR00059">
    <property type="entry name" value="RIBOSOMALL6"/>
</dbReference>
<dbReference type="SUPFAM" id="SSF56053">
    <property type="entry name" value="Ribosomal protein L6"/>
    <property type="match status" value="2"/>
</dbReference>
<dbReference type="PROSITE" id="PS00525">
    <property type="entry name" value="RIBOSOMAL_L6_1"/>
    <property type="match status" value="1"/>
</dbReference>
<gene>
    <name evidence="1" type="primary">rplF</name>
    <name type="ordered locus">Swoo_4675</name>
</gene>
<protein>
    <recommendedName>
        <fullName evidence="1">Large ribosomal subunit protein uL6</fullName>
    </recommendedName>
    <alternativeName>
        <fullName evidence="3">50S ribosomal protein L6</fullName>
    </alternativeName>
</protein>
<sequence>MSRVAKAPVAIPAGVEVTLNEQTITVKGTKGSLTRVINTDVIVVVEDNEIKCSSVEGVKTNAQAGTARALINNMVVGVTEGFEKKLQLIGVGYRAKIAGNGVDLTLGFSHPLVHELPDGVSAVCPSQTEIVLTGTDKQLVGQVAAEIRGYRPPEPYKGKGVRYADEQVRRKEAKKK</sequence>
<name>RL6_SHEWM</name>
<accession>B1KMW8</accession>
<keyword id="KW-1185">Reference proteome</keyword>
<keyword id="KW-0687">Ribonucleoprotein</keyword>
<keyword id="KW-0689">Ribosomal protein</keyword>
<keyword id="KW-0694">RNA-binding</keyword>
<keyword id="KW-0699">rRNA-binding</keyword>
<comment type="function">
    <text evidence="1">This protein binds to the 23S rRNA, and is important in its secondary structure. It is located near the subunit interface in the base of the L7/L12 stalk, and near the tRNA binding site of the peptidyltransferase center.</text>
</comment>
<comment type="subunit">
    <text evidence="1">Part of the 50S ribosomal subunit.</text>
</comment>
<comment type="similarity">
    <text evidence="1">Belongs to the universal ribosomal protein uL6 family.</text>
</comment>
<evidence type="ECO:0000255" key="1">
    <source>
        <dbReference type="HAMAP-Rule" id="MF_01365"/>
    </source>
</evidence>
<evidence type="ECO:0000256" key="2">
    <source>
        <dbReference type="SAM" id="MobiDB-lite"/>
    </source>
</evidence>
<evidence type="ECO:0000305" key="3"/>
<organism>
    <name type="scientific">Shewanella woodyi (strain ATCC 51908 / MS32)</name>
    <dbReference type="NCBI Taxonomy" id="392500"/>
    <lineage>
        <taxon>Bacteria</taxon>
        <taxon>Pseudomonadati</taxon>
        <taxon>Pseudomonadota</taxon>
        <taxon>Gammaproteobacteria</taxon>
        <taxon>Alteromonadales</taxon>
        <taxon>Shewanellaceae</taxon>
        <taxon>Shewanella</taxon>
    </lineage>
</organism>